<protein>
    <recommendedName>
        <fullName evidence="1">Cytidylate kinase</fullName>
        <shortName evidence="1">CK</shortName>
        <ecNumber evidence="1">2.7.4.25</ecNumber>
    </recommendedName>
    <alternativeName>
        <fullName evidence="1">Cytidine monophosphate kinase</fullName>
        <shortName evidence="1">CMP kinase</shortName>
    </alternativeName>
</protein>
<proteinExistence type="inferred from homology"/>
<feature type="chain" id="PRO_1000048271" description="Cytidylate kinase">
    <location>
        <begin position="1"/>
        <end position="231"/>
    </location>
</feature>
<feature type="binding site" evidence="1">
    <location>
        <begin position="12"/>
        <end position="20"/>
    </location>
    <ligand>
        <name>ATP</name>
        <dbReference type="ChEBI" id="CHEBI:30616"/>
    </ligand>
</feature>
<name>KCY_SHEAM</name>
<gene>
    <name evidence="1" type="primary">cmk</name>
    <name type="ordered locus">Sama_1735</name>
</gene>
<accession>A1S6D4</accession>
<comment type="catalytic activity">
    <reaction evidence="1">
        <text>CMP + ATP = CDP + ADP</text>
        <dbReference type="Rhea" id="RHEA:11600"/>
        <dbReference type="ChEBI" id="CHEBI:30616"/>
        <dbReference type="ChEBI" id="CHEBI:58069"/>
        <dbReference type="ChEBI" id="CHEBI:60377"/>
        <dbReference type="ChEBI" id="CHEBI:456216"/>
        <dbReference type="EC" id="2.7.4.25"/>
    </reaction>
</comment>
<comment type="catalytic activity">
    <reaction evidence="1">
        <text>dCMP + ATP = dCDP + ADP</text>
        <dbReference type="Rhea" id="RHEA:25094"/>
        <dbReference type="ChEBI" id="CHEBI:30616"/>
        <dbReference type="ChEBI" id="CHEBI:57566"/>
        <dbReference type="ChEBI" id="CHEBI:58593"/>
        <dbReference type="ChEBI" id="CHEBI:456216"/>
        <dbReference type="EC" id="2.7.4.25"/>
    </reaction>
</comment>
<comment type="subcellular location">
    <subcellularLocation>
        <location evidence="1">Cytoplasm</location>
    </subcellularLocation>
</comment>
<comment type="similarity">
    <text evidence="1">Belongs to the cytidylate kinase family. Type 1 subfamily.</text>
</comment>
<dbReference type="EC" id="2.7.4.25" evidence="1"/>
<dbReference type="EMBL" id="CP000507">
    <property type="protein sequence ID" value="ABL99940.1"/>
    <property type="molecule type" value="Genomic_DNA"/>
</dbReference>
<dbReference type="RefSeq" id="WP_011759848.1">
    <property type="nucleotide sequence ID" value="NC_008700.1"/>
</dbReference>
<dbReference type="SMR" id="A1S6D4"/>
<dbReference type="STRING" id="326297.Sama_1735"/>
<dbReference type="KEGG" id="saz:Sama_1735"/>
<dbReference type="eggNOG" id="COG0283">
    <property type="taxonomic scope" value="Bacteria"/>
</dbReference>
<dbReference type="HOGENOM" id="CLU_079959_2_0_6"/>
<dbReference type="OrthoDB" id="9807434at2"/>
<dbReference type="Proteomes" id="UP000009175">
    <property type="component" value="Chromosome"/>
</dbReference>
<dbReference type="GO" id="GO:0005829">
    <property type="term" value="C:cytosol"/>
    <property type="evidence" value="ECO:0007669"/>
    <property type="project" value="TreeGrafter"/>
</dbReference>
<dbReference type="GO" id="GO:0005524">
    <property type="term" value="F:ATP binding"/>
    <property type="evidence" value="ECO:0007669"/>
    <property type="project" value="UniProtKB-UniRule"/>
</dbReference>
<dbReference type="GO" id="GO:0036430">
    <property type="term" value="F:CMP kinase activity"/>
    <property type="evidence" value="ECO:0007669"/>
    <property type="project" value="RHEA"/>
</dbReference>
<dbReference type="GO" id="GO:0036431">
    <property type="term" value="F:dCMP kinase activity"/>
    <property type="evidence" value="ECO:0007669"/>
    <property type="project" value="RHEA"/>
</dbReference>
<dbReference type="GO" id="GO:0015949">
    <property type="term" value="P:nucleobase-containing small molecule interconversion"/>
    <property type="evidence" value="ECO:0007669"/>
    <property type="project" value="TreeGrafter"/>
</dbReference>
<dbReference type="GO" id="GO:0006220">
    <property type="term" value="P:pyrimidine nucleotide metabolic process"/>
    <property type="evidence" value="ECO:0007669"/>
    <property type="project" value="UniProtKB-UniRule"/>
</dbReference>
<dbReference type="CDD" id="cd02020">
    <property type="entry name" value="CMPK"/>
    <property type="match status" value="1"/>
</dbReference>
<dbReference type="FunFam" id="3.40.50.300:FF:000262">
    <property type="entry name" value="Cytidylate kinase"/>
    <property type="match status" value="1"/>
</dbReference>
<dbReference type="Gene3D" id="3.40.50.300">
    <property type="entry name" value="P-loop containing nucleotide triphosphate hydrolases"/>
    <property type="match status" value="1"/>
</dbReference>
<dbReference type="HAMAP" id="MF_00238">
    <property type="entry name" value="Cytidyl_kinase_type1"/>
    <property type="match status" value="1"/>
</dbReference>
<dbReference type="InterPro" id="IPR003136">
    <property type="entry name" value="Cytidylate_kin"/>
</dbReference>
<dbReference type="InterPro" id="IPR011994">
    <property type="entry name" value="Cytidylate_kinase_dom"/>
</dbReference>
<dbReference type="InterPro" id="IPR027417">
    <property type="entry name" value="P-loop_NTPase"/>
</dbReference>
<dbReference type="NCBIfam" id="TIGR00017">
    <property type="entry name" value="cmk"/>
    <property type="match status" value="1"/>
</dbReference>
<dbReference type="PANTHER" id="PTHR21299:SF2">
    <property type="entry name" value="CYTIDYLATE KINASE"/>
    <property type="match status" value="1"/>
</dbReference>
<dbReference type="PANTHER" id="PTHR21299">
    <property type="entry name" value="CYTIDYLATE KINASE/PANTOATE-BETA-ALANINE LIGASE"/>
    <property type="match status" value="1"/>
</dbReference>
<dbReference type="Pfam" id="PF02224">
    <property type="entry name" value="Cytidylate_kin"/>
    <property type="match status" value="1"/>
</dbReference>
<dbReference type="SUPFAM" id="SSF52540">
    <property type="entry name" value="P-loop containing nucleoside triphosphate hydrolases"/>
    <property type="match status" value="1"/>
</dbReference>
<keyword id="KW-0067">ATP-binding</keyword>
<keyword id="KW-0963">Cytoplasm</keyword>
<keyword id="KW-0418">Kinase</keyword>
<keyword id="KW-0547">Nucleotide-binding</keyword>
<keyword id="KW-1185">Reference proteome</keyword>
<keyword id="KW-0808">Transferase</keyword>
<reference key="1">
    <citation type="submission" date="2006-12" db="EMBL/GenBank/DDBJ databases">
        <title>Complete sequence of Shewanella amazonensis SB2B.</title>
        <authorList>
            <consortium name="US DOE Joint Genome Institute"/>
            <person name="Copeland A."/>
            <person name="Lucas S."/>
            <person name="Lapidus A."/>
            <person name="Barry K."/>
            <person name="Detter J.C."/>
            <person name="Glavina del Rio T."/>
            <person name="Hammon N."/>
            <person name="Israni S."/>
            <person name="Dalin E."/>
            <person name="Tice H."/>
            <person name="Pitluck S."/>
            <person name="Munk A.C."/>
            <person name="Brettin T."/>
            <person name="Bruce D."/>
            <person name="Han C."/>
            <person name="Tapia R."/>
            <person name="Gilna P."/>
            <person name="Schmutz J."/>
            <person name="Larimer F."/>
            <person name="Land M."/>
            <person name="Hauser L."/>
            <person name="Kyrpides N."/>
            <person name="Mikhailova N."/>
            <person name="Fredrickson J."/>
            <person name="Richardson P."/>
        </authorList>
    </citation>
    <scope>NUCLEOTIDE SEQUENCE [LARGE SCALE GENOMIC DNA]</scope>
    <source>
        <strain>ATCC BAA-1098 / SB2B</strain>
    </source>
</reference>
<sequence>MSERAPVVTIDGPSGAGKGTIAHLLAKHYGWQLLDSGAIYRVLALAALHHNVELENEEAITLLAAHLDVQFLAGGDKDAIKVVLEGEDVTGAIRTQECSNAASKVAAFPRVREALLRRQRAFCQAPGLIADGRDMGTVVFPTAPAKLYLTASAEERAQRRYNQLQDKGFDVKIDRLLAEIQERDDRDMNRPVAPLVPADDALVIDTTGIGIDDVFAQCVAHINDKLSASGF</sequence>
<evidence type="ECO:0000255" key="1">
    <source>
        <dbReference type="HAMAP-Rule" id="MF_00238"/>
    </source>
</evidence>
<organism>
    <name type="scientific">Shewanella amazonensis (strain ATCC BAA-1098 / SB2B)</name>
    <dbReference type="NCBI Taxonomy" id="326297"/>
    <lineage>
        <taxon>Bacteria</taxon>
        <taxon>Pseudomonadati</taxon>
        <taxon>Pseudomonadota</taxon>
        <taxon>Gammaproteobacteria</taxon>
        <taxon>Alteromonadales</taxon>
        <taxon>Shewanellaceae</taxon>
        <taxon>Shewanella</taxon>
    </lineage>
</organism>